<evidence type="ECO:0000255" key="1">
    <source>
        <dbReference type="HAMAP-Rule" id="MF_01019"/>
    </source>
</evidence>
<dbReference type="EC" id="3.5.4.19" evidence="1"/>
<dbReference type="EC" id="3.6.1.31" evidence="1"/>
<dbReference type="EMBL" id="BA000037">
    <property type="protein sequence ID" value="BAC94121.1"/>
    <property type="molecule type" value="Genomic_DNA"/>
</dbReference>
<dbReference type="RefSeq" id="WP_011150024.1">
    <property type="nucleotide sequence ID" value="NC_005139.1"/>
</dbReference>
<dbReference type="SMR" id="Q7MLS0"/>
<dbReference type="STRING" id="672.VV93_v1c12700"/>
<dbReference type="KEGG" id="vvy:VV1357"/>
<dbReference type="PATRIC" id="fig|196600.6.peg.1346"/>
<dbReference type="eggNOG" id="COG0139">
    <property type="taxonomic scope" value="Bacteria"/>
</dbReference>
<dbReference type="eggNOG" id="COG0140">
    <property type="taxonomic scope" value="Bacteria"/>
</dbReference>
<dbReference type="HOGENOM" id="CLU_048577_3_1_6"/>
<dbReference type="UniPathway" id="UPA00031">
    <property type="reaction ID" value="UER00007"/>
</dbReference>
<dbReference type="UniPathway" id="UPA00031">
    <property type="reaction ID" value="UER00008"/>
</dbReference>
<dbReference type="Proteomes" id="UP000002675">
    <property type="component" value="Chromosome I"/>
</dbReference>
<dbReference type="GO" id="GO:0005737">
    <property type="term" value="C:cytoplasm"/>
    <property type="evidence" value="ECO:0007669"/>
    <property type="project" value="UniProtKB-SubCell"/>
</dbReference>
<dbReference type="GO" id="GO:0005524">
    <property type="term" value="F:ATP binding"/>
    <property type="evidence" value="ECO:0007669"/>
    <property type="project" value="UniProtKB-KW"/>
</dbReference>
<dbReference type="GO" id="GO:0004635">
    <property type="term" value="F:phosphoribosyl-AMP cyclohydrolase activity"/>
    <property type="evidence" value="ECO:0007669"/>
    <property type="project" value="UniProtKB-UniRule"/>
</dbReference>
<dbReference type="GO" id="GO:0004636">
    <property type="term" value="F:phosphoribosyl-ATP diphosphatase activity"/>
    <property type="evidence" value="ECO:0007669"/>
    <property type="project" value="UniProtKB-UniRule"/>
</dbReference>
<dbReference type="GO" id="GO:0000105">
    <property type="term" value="P:L-histidine biosynthetic process"/>
    <property type="evidence" value="ECO:0007669"/>
    <property type="project" value="UniProtKB-UniRule"/>
</dbReference>
<dbReference type="CDD" id="cd11534">
    <property type="entry name" value="NTP-PPase_HisIE_like"/>
    <property type="match status" value="1"/>
</dbReference>
<dbReference type="FunFam" id="1.10.287.1080:FF:000002">
    <property type="entry name" value="Histidine biosynthesis bifunctional protein HisIE"/>
    <property type="match status" value="1"/>
</dbReference>
<dbReference type="FunFam" id="3.10.20.810:FF:000001">
    <property type="entry name" value="Histidine biosynthesis bifunctional protein HisIE"/>
    <property type="match status" value="1"/>
</dbReference>
<dbReference type="Gene3D" id="1.10.287.1080">
    <property type="entry name" value="MazG-like"/>
    <property type="match status" value="1"/>
</dbReference>
<dbReference type="Gene3D" id="3.10.20.810">
    <property type="entry name" value="Phosphoribosyl-AMP cyclohydrolase"/>
    <property type="match status" value="1"/>
</dbReference>
<dbReference type="HAMAP" id="MF_01020">
    <property type="entry name" value="HisE"/>
    <property type="match status" value="1"/>
</dbReference>
<dbReference type="HAMAP" id="MF_01019">
    <property type="entry name" value="HisIE"/>
    <property type="match status" value="1"/>
</dbReference>
<dbReference type="InterPro" id="IPR023019">
    <property type="entry name" value="His_synth_HisIE"/>
</dbReference>
<dbReference type="InterPro" id="IPR008179">
    <property type="entry name" value="HisE"/>
</dbReference>
<dbReference type="InterPro" id="IPR021130">
    <property type="entry name" value="PRib-ATP_PPHydrolase-like"/>
</dbReference>
<dbReference type="InterPro" id="IPR002496">
    <property type="entry name" value="PRib_AMP_CycHydrolase_dom"/>
</dbReference>
<dbReference type="InterPro" id="IPR038019">
    <property type="entry name" value="PRib_AMP_CycHydrolase_sf"/>
</dbReference>
<dbReference type="NCBIfam" id="TIGR03188">
    <property type="entry name" value="histidine_hisI"/>
    <property type="match status" value="1"/>
</dbReference>
<dbReference type="NCBIfam" id="NF000768">
    <property type="entry name" value="PRK00051.1"/>
    <property type="match status" value="1"/>
</dbReference>
<dbReference type="NCBIfam" id="NF002747">
    <property type="entry name" value="PRK02759.1"/>
    <property type="match status" value="1"/>
</dbReference>
<dbReference type="PANTHER" id="PTHR42945">
    <property type="entry name" value="HISTIDINE BIOSYNTHESIS BIFUNCTIONAL PROTEIN"/>
    <property type="match status" value="1"/>
</dbReference>
<dbReference type="PANTHER" id="PTHR42945:SF9">
    <property type="entry name" value="HISTIDINE BIOSYNTHESIS BIFUNCTIONAL PROTEIN HISIE"/>
    <property type="match status" value="1"/>
</dbReference>
<dbReference type="Pfam" id="PF01502">
    <property type="entry name" value="PRA-CH"/>
    <property type="match status" value="1"/>
</dbReference>
<dbReference type="Pfam" id="PF01503">
    <property type="entry name" value="PRA-PH"/>
    <property type="match status" value="1"/>
</dbReference>
<dbReference type="SUPFAM" id="SSF101386">
    <property type="entry name" value="all-alpha NTP pyrophosphatases"/>
    <property type="match status" value="1"/>
</dbReference>
<dbReference type="SUPFAM" id="SSF141734">
    <property type="entry name" value="HisI-like"/>
    <property type="match status" value="1"/>
</dbReference>
<feature type="chain" id="PRO_0000136448" description="Histidine biosynthesis bifunctional protein HisIE">
    <location>
        <begin position="1"/>
        <end position="211"/>
    </location>
</feature>
<feature type="region of interest" description="Phosphoribosyl-AMP cyclohydrolase">
    <location>
        <begin position="1"/>
        <end position="122"/>
    </location>
</feature>
<feature type="region of interest" description="Phosphoribosyl-ATP pyrophosphohydrolase">
    <location>
        <begin position="123"/>
        <end position="211"/>
    </location>
</feature>
<reference key="1">
    <citation type="journal article" date="2003" name="Genome Res.">
        <title>Comparative genome analysis of Vibrio vulnificus, a marine pathogen.</title>
        <authorList>
            <person name="Chen C.-Y."/>
            <person name="Wu K.-M."/>
            <person name="Chang Y.-C."/>
            <person name="Chang C.-H."/>
            <person name="Tsai H.-C."/>
            <person name="Liao T.-L."/>
            <person name="Liu Y.-M."/>
            <person name="Chen H.-J."/>
            <person name="Shen A.B.-T."/>
            <person name="Li J.-C."/>
            <person name="Su T.-L."/>
            <person name="Shao C.-P."/>
            <person name="Lee C.-T."/>
            <person name="Hor L.-I."/>
            <person name="Tsai S.-F."/>
        </authorList>
    </citation>
    <scope>NUCLEOTIDE SEQUENCE [LARGE SCALE GENOMIC DNA]</scope>
    <source>
        <strain>YJ016</strain>
    </source>
</reference>
<organism>
    <name type="scientific">Vibrio vulnificus (strain YJ016)</name>
    <dbReference type="NCBI Taxonomy" id="196600"/>
    <lineage>
        <taxon>Bacteria</taxon>
        <taxon>Pseudomonadati</taxon>
        <taxon>Pseudomonadota</taxon>
        <taxon>Gammaproteobacteria</taxon>
        <taxon>Vibrionales</taxon>
        <taxon>Vibrionaceae</taxon>
        <taxon>Vibrio</taxon>
    </lineage>
</organism>
<protein>
    <recommendedName>
        <fullName evidence="1">Histidine biosynthesis bifunctional protein HisIE</fullName>
    </recommendedName>
    <domain>
        <recommendedName>
            <fullName evidence="1">Phosphoribosyl-AMP cyclohydrolase</fullName>
            <shortName evidence="1">PRA-CH</shortName>
            <ecNumber evidence="1">3.5.4.19</ecNumber>
        </recommendedName>
    </domain>
    <domain>
        <recommendedName>
            <fullName evidence="1">Phosphoribosyl-ATP pyrophosphatase</fullName>
            <shortName evidence="1">PRA-PH</shortName>
            <ecNumber evidence="1">3.6.1.31</ecNumber>
        </recommendedName>
    </domain>
</protein>
<name>HIS2_VIBVY</name>
<accession>Q7MLS0</accession>
<proteinExistence type="inferred from homology"/>
<keyword id="KW-0028">Amino-acid biosynthesis</keyword>
<keyword id="KW-0067">ATP-binding</keyword>
<keyword id="KW-0963">Cytoplasm</keyword>
<keyword id="KW-0368">Histidine biosynthesis</keyword>
<keyword id="KW-0378">Hydrolase</keyword>
<keyword id="KW-0511">Multifunctional enzyme</keyword>
<keyword id="KW-0547">Nucleotide-binding</keyword>
<sequence>MSVKAAEVSSLAERINWEKVDGLVPAIVQDFQSSQVLMMGYMNQDALAKTGETGQVTFFSRTKERLWTKGETSGNVLQLVNMSLDCDNDTLLVKVNPIGPTCHTGTTTCWDGDPQEESQMVWLHQLEQLLAARKSADPDSSYTASLYARGTKRISQKVGEEGVEVALAATSGDKAELVCESADLIYHLLVLLQDQGLSMNDVINKLKERHK</sequence>
<gene>
    <name evidence="1" type="primary">hisI</name>
    <name evidence="1" type="synonym">hisIE</name>
    <name type="ordered locus">VV1357</name>
</gene>
<comment type="catalytic activity">
    <reaction evidence="1">
        <text>1-(5-phospho-beta-D-ribosyl)-ATP + H2O = 1-(5-phospho-beta-D-ribosyl)-5'-AMP + diphosphate + H(+)</text>
        <dbReference type="Rhea" id="RHEA:22828"/>
        <dbReference type="ChEBI" id="CHEBI:15377"/>
        <dbReference type="ChEBI" id="CHEBI:15378"/>
        <dbReference type="ChEBI" id="CHEBI:33019"/>
        <dbReference type="ChEBI" id="CHEBI:59457"/>
        <dbReference type="ChEBI" id="CHEBI:73183"/>
        <dbReference type="EC" id="3.6.1.31"/>
    </reaction>
</comment>
<comment type="catalytic activity">
    <reaction evidence="1">
        <text>1-(5-phospho-beta-D-ribosyl)-5'-AMP + H2O = 1-(5-phospho-beta-D-ribosyl)-5-[(5-phospho-beta-D-ribosylamino)methylideneamino]imidazole-4-carboxamide</text>
        <dbReference type="Rhea" id="RHEA:20049"/>
        <dbReference type="ChEBI" id="CHEBI:15377"/>
        <dbReference type="ChEBI" id="CHEBI:58435"/>
        <dbReference type="ChEBI" id="CHEBI:59457"/>
        <dbReference type="EC" id="3.5.4.19"/>
    </reaction>
</comment>
<comment type="pathway">
    <text evidence="1">Amino-acid biosynthesis; L-histidine biosynthesis; L-histidine from 5-phospho-alpha-D-ribose 1-diphosphate: step 2/9.</text>
</comment>
<comment type="pathway">
    <text evidence="1">Amino-acid biosynthesis; L-histidine biosynthesis; L-histidine from 5-phospho-alpha-D-ribose 1-diphosphate: step 3/9.</text>
</comment>
<comment type="subcellular location">
    <subcellularLocation>
        <location evidence="1">Cytoplasm</location>
    </subcellularLocation>
</comment>
<comment type="similarity">
    <text evidence="1">In the N-terminal section; belongs to the PRA-CH family.</text>
</comment>
<comment type="similarity">
    <text evidence="1">In the C-terminal section; belongs to the PRA-PH family.</text>
</comment>